<organism>
    <name type="scientific">Mus musculus</name>
    <name type="common">Mouse</name>
    <dbReference type="NCBI Taxonomy" id="10090"/>
    <lineage>
        <taxon>Eukaryota</taxon>
        <taxon>Metazoa</taxon>
        <taxon>Chordata</taxon>
        <taxon>Craniata</taxon>
        <taxon>Vertebrata</taxon>
        <taxon>Euteleostomi</taxon>
        <taxon>Mammalia</taxon>
        <taxon>Eutheria</taxon>
        <taxon>Euarchontoglires</taxon>
        <taxon>Glires</taxon>
        <taxon>Rodentia</taxon>
        <taxon>Myomorpha</taxon>
        <taxon>Muroidea</taxon>
        <taxon>Muridae</taxon>
        <taxon>Murinae</taxon>
        <taxon>Mus</taxon>
        <taxon>Mus</taxon>
    </lineage>
</organism>
<feature type="signal peptide" evidence="1">
    <location>
        <begin position="1"/>
        <end position="26"/>
    </location>
</feature>
<feature type="chain" id="PRO_0000012781" description="Lutropin-choriogonadotropic hormone receptor">
    <location>
        <begin position="27"/>
        <end position="700"/>
    </location>
</feature>
<feature type="topological domain" description="Extracellular" evidence="3">
    <location>
        <begin position="27"/>
        <end position="362"/>
    </location>
</feature>
<feature type="transmembrane region" description="Helical; Name=1" evidence="3">
    <location>
        <begin position="363"/>
        <end position="390"/>
    </location>
</feature>
<feature type="topological domain" description="Cytoplasmic" evidence="3">
    <location>
        <begin position="391"/>
        <end position="399"/>
    </location>
</feature>
<feature type="transmembrane region" description="Helical; Name=2" evidence="3">
    <location>
        <begin position="400"/>
        <end position="422"/>
    </location>
</feature>
<feature type="topological domain" description="Extracellular" evidence="3">
    <location>
        <begin position="423"/>
        <end position="443"/>
    </location>
</feature>
<feature type="transmembrane region" description="Helical; Name=3" evidence="3">
    <location>
        <begin position="444"/>
        <end position="466"/>
    </location>
</feature>
<feature type="topological domain" description="Cytoplasmic" evidence="3">
    <location>
        <begin position="467"/>
        <end position="486"/>
    </location>
</feature>
<feature type="transmembrane region" description="Helical; Name=4" evidence="3">
    <location>
        <begin position="487"/>
        <end position="509"/>
    </location>
</feature>
<feature type="topological domain" description="Extracellular" evidence="3">
    <location>
        <begin position="510"/>
        <end position="529"/>
    </location>
</feature>
<feature type="transmembrane region" description="Helical; Name=5" evidence="3">
    <location>
        <begin position="530"/>
        <end position="551"/>
    </location>
</feature>
<feature type="topological domain" description="Cytoplasmic" evidence="3">
    <location>
        <begin position="552"/>
        <end position="574"/>
    </location>
</feature>
<feature type="transmembrane region" description="Helical; Name=6" evidence="3">
    <location>
        <begin position="575"/>
        <end position="598"/>
    </location>
</feature>
<feature type="topological domain" description="Extracellular" evidence="3">
    <location>
        <begin position="599"/>
        <end position="609"/>
    </location>
</feature>
<feature type="transmembrane region" description="Helical; Name=7" evidence="3">
    <location>
        <begin position="610"/>
        <end position="631"/>
    </location>
</feature>
<feature type="topological domain" description="Cytoplasmic" evidence="3">
    <location>
        <begin position="632"/>
        <end position="700"/>
    </location>
</feature>
<feature type="repeat" description="LRR 1">
    <location>
        <begin position="52"/>
        <end position="75"/>
    </location>
</feature>
<feature type="repeat" description="LRR 2">
    <location>
        <begin position="126"/>
        <end position="150"/>
    </location>
</feature>
<feature type="repeat" description="LRR 3">
    <location>
        <begin position="176"/>
        <end position="200"/>
    </location>
</feature>
<feature type="repeat" description="LRR 4">
    <location>
        <begin position="225"/>
        <end position="248"/>
    </location>
</feature>
<feature type="modified residue" description="Sulfotyrosine" evidence="2">
    <location>
        <position position="335"/>
    </location>
</feature>
<feature type="lipid moiety-binding region" description="S-palmitoyl cysteine" evidence="1">
    <location>
        <position position="647"/>
    </location>
</feature>
<feature type="lipid moiety-binding region" description="S-palmitoyl cysteine" evidence="1">
    <location>
        <position position="648"/>
    </location>
</feature>
<feature type="glycosylation site" description="N-linked (GlcNAc...) asparagine" evidence="3">
    <location>
        <position position="103"/>
    </location>
</feature>
<feature type="glycosylation site" description="N-linked (GlcNAc...) asparagine" evidence="3">
    <location>
        <position position="178"/>
    </location>
</feature>
<feature type="glycosylation site" description="N-linked (GlcNAc...) asparagine" evidence="3">
    <location>
        <position position="199"/>
    </location>
</feature>
<feature type="glycosylation site" description="N-linked (GlcNAc...) asparagine" evidence="3">
    <location>
        <position position="295"/>
    </location>
</feature>
<feature type="glycosylation site" description="N-linked (GlcNAc...) asparagine" evidence="3">
    <location>
        <position position="303"/>
    </location>
</feature>
<feature type="glycosylation site" description="N-linked (GlcNAc...) asparagine" evidence="3">
    <location>
        <position position="317"/>
    </location>
</feature>
<feature type="disulfide bond" evidence="4">
    <location>
        <begin position="443"/>
        <end position="518"/>
    </location>
</feature>
<gene>
    <name type="primary">Lhcgr</name>
    <name type="synonym">Lhr</name>
</gene>
<sequence>MGRRVPALRQLLVLAMLVLKQSQLHSPELSGSRCPEPCDCAPDGALRCPGPRAGLARLSLTYLPVKVIPSQAFRGLNEVVKIEISQSDSLERIEANAFDNLLNLSEILIQNTKNLLYIEPGAFTNLPRLKYLSICNTGIRTLPDVSKISSSEFNFILEICDNLYITTIPGNAFQGMNNESITLKLYGNGFEEVQSHAFNGTTLISLELKENIYLEKMHSGTFQGATGPSILDVSSTKLQALPSHGLESIQTLIATSSYSLKTLPSREKFTSLLVATLTYPSHCCAFRNLPKKEQNFSFSIFENFSKQCESTVREANNETLYSAIFEENELSGWDYDYDFCSPKTLQCTPEPDAFNPCEDIMGYAFLRVLIWLINILAIFGNLTVLFVLLTSRYKLTVPRFLMCNLSFADFCMGLYLLLIASVDSQTKGQYYNHAIDWQTGSGCSAAGFFTVFASELSVYTLTVITLERWHTITYAVQLDQKLRLRHAIPIMLGGWIFSTLMATLPLVGVSSYMKVSICLPMDVESTLSQVYILSILLLNAVAFVVICACYVRIYFAVQNPELTAPNKDTKIAKKMAILIFTDFTCMAPISFFAISAAFKVPLITVTNSKVLLVLFYPVNSCANPFLYAVFTKAFQRDFFLLLSRFGCCKHRAELYRRKEFSACTFNSKNGFPRSSKPSQAALKLSIVHCQQPTPPRVLIQ</sequence>
<proteinExistence type="evidence at transcript level"/>
<protein>
    <recommendedName>
        <fullName>Lutropin-choriogonadotropic hormone receptor</fullName>
        <shortName>LH/CG-R</shortName>
    </recommendedName>
    <alternativeName>
        <fullName>Luteinizing hormone receptor</fullName>
        <shortName>LSH-R</shortName>
    </alternativeName>
</protein>
<reference key="1">
    <citation type="journal article" date="1992" name="J. Biol. Chem.">
        <title>Evidence for dual coupling of the murine luteinizing hormone receptor to adenylyl cyclase and phosphoinositide breakdown and Ca2+ mobilization. Studies with the cloned murine luteinizing hormone receptor expressed in L cells.</title>
        <authorList>
            <person name="Gudermann T."/>
            <person name="Birnbaumer M."/>
            <person name="Birnbaumer L."/>
        </authorList>
    </citation>
    <scope>NUCLEOTIDE SEQUENCE [MRNA]</scope>
</reference>
<reference key="2">
    <citation type="journal article" date="1992" name="Mol. Cell. Endocrinol.">
        <title>The murine luteinizing hormone and follicle-stimulating hormone receptor genes: transcription initiation sites, putative promoter sequences and promoter activity.</title>
        <authorList>
            <person name="Huhtaniemi I.T."/>
            <person name="Eskola V."/>
            <person name="Pakarinen P."/>
            <person name="Matikainen T."/>
            <person name="Sprengel R."/>
        </authorList>
    </citation>
    <scope>NUCLEOTIDE SEQUENCE [GENOMIC DNA] OF 1-58</scope>
</reference>
<comment type="function">
    <text evidence="2">Receptor for lutropin-choriogonadotropic hormone. The activity of this receptor is mediated by G proteins which activate adenylate cyclase.</text>
</comment>
<comment type="subcellular location">
    <subcellularLocation>
        <location evidence="2">Cell membrane</location>
        <topology evidence="2">Multi-pass membrane protein</topology>
    </subcellularLocation>
</comment>
<comment type="PTM">
    <text evidence="2">Sulfated.</text>
</comment>
<comment type="similarity">
    <text evidence="4">Belongs to the G-protein coupled receptor 1 family. FSH/LSH/TSH subfamily.</text>
</comment>
<name>LSHR_MOUSE</name>
<evidence type="ECO:0000250" key="1"/>
<evidence type="ECO:0000250" key="2">
    <source>
        <dbReference type="UniProtKB" id="P22888"/>
    </source>
</evidence>
<evidence type="ECO:0000255" key="3"/>
<evidence type="ECO:0000255" key="4">
    <source>
        <dbReference type="PROSITE-ProRule" id="PRU00521"/>
    </source>
</evidence>
<accession>P30730</accession>
<keyword id="KW-1003">Cell membrane</keyword>
<keyword id="KW-1015">Disulfide bond</keyword>
<keyword id="KW-0297">G-protein coupled receptor</keyword>
<keyword id="KW-0325">Glycoprotein</keyword>
<keyword id="KW-0433">Leucine-rich repeat</keyword>
<keyword id="KW-0449">Lipoprotein</keyword>
<keyword id="KW-0472">Membrane</keyword>
<keyword id="KW-0564">Palmitate</keyword>
<keyword id="KW-0675">Receptor</keyword>
<keyword id="KW-1185">Reference proteome</keyword>
<keyword id="KW-0677">Repeat</keyword>
<keyword id="KW-0732">Signal</keyword>
<keyword id="KW-0765">Sulfation</keyword>
<keyword id="KW-0807">Transducer</keyword>
<keyword id="KW-0812">Transmembrane</keyword>
<keyword id="KW-1133">Transmembrane helix</keyword>
<dbReference type="EMBL" id="M81310">
    <property type="protein sequence ID" value="AAA39432.1"/>
    <property type="molecule type" value="mRNA"/>
</dbReference>
<dbReference type="EMBL" id="M87571">
    <property type="protein sequence ID" value="AAA39433.1"/>
    <property type="molecule type" value="Genomic_DNA"/>
</dbReference>
<dbReference type="EMBL" id="S49753">
    <property type="protein sequence ID" value="AAB24402.1"/>
    <property type="molecule type" value="Genomic_DNA"/>
</dbReference>
<dbReference type="CCDS" id="CCDS29025.1"/>
<dbReference type="PIR" id="A42395">
    <property type="entry name" value="A42395"/>
</dbReference>
<dbReference type="PIR" id="I77464">
    <property type="entry name" value="I77464"/>
</dbReference>
<dbReference type="RefSeq" id="NP_038610.1">
    <property type="nucleotide sequence ID" value="NM_013582.3"/>
</dbReference>
<dbReference type="SMR" id="P30730"/>
<dbReference type="BioGRID" id="201153">
    <property type="interactions" value="2"/>
</dbReference>
<dbReference type="FunCoup" id="P30730">
    <property type="interactions" value="1291"/>
</dbReference>
<dbReference type="IntAct" id="P30730">
    <property type="interactions" value="2"/>
</dbReference>
<dbReference type="MINT" id="P30730"/>
<dbReference type="STRING" id="10090.ENSMUSP00000024916"/>
<dbReference type="BindingDB" id="P30730"/>
<dbReference type="ChEMBL" id="CHEMBL4523213"/>
<dbReference type="GlyCosmos" id="P30730">
    <property type="glycosylation" value="6 sites, No reported glycans"/>
</dbReference>
<dbReference type="GlyGen" id="P30730">
    <property type="glycosylation" value="7 sites"/>
</dbReference>
<dbReference type="PhosphoSitePlus" id="P30730"/>
<dbReference type="SwissPalm" id="P30730"/>
<dbReference type="PaxDb" id="10090-ENSMUSP00000024916"/>
<dbReference type="ProteomicsDB" id="293404"/>
<dbReference type="DNASU" id="16867"/>
<dbReference type="Ensembl" id="ENSMUST00000024916.7">
    <property type="protein sequence ID" value="ENSMUSP00000024916.6"/>
    <property type="gene ID" value="ENSMUSG00000024107.8"/>
</dbReference>
<dbReference type="GeneID" id="16867"/>
<dbReference type="KEGG" id="mmu:16867"/>
<dbReference type="UCSC" id="uc008dvw.1">
    <property type="organism name" value="mouse"/>
</dbReference>
<dbReference type="AGR" id="MGI:96783"/>
<dbReference type="CTD" id="3973"/>
<dbReference type="MGI" id="MGI:96783">
    <property type="gene designation" value="Lhcgr"/>
</dbReference>
<dbReference type="VEuPathDB" id="HostDB:ENSMUSG00000024107"/>
<dbReference type="eggNOG" id="KOG2087">
    <property type="taxonomic scope" value="Eukaryota"/>
</dbReference>
<dbReference type="GeneTree" id="ENSGT00940000157364"/>
<dbReference type="HOGENOM" id="CLU_006130_1_1_1"/>
<dbReference type="InParanoid" id="P30730"/>
<dbReference type="OMA" id="ECESTMR"/>
<dbReference type="OrthoDB" id="5981530at2759"/>
<dbReference type="PhylomeDB" id="P30730"/>
<dbReference type="TreeFam" id="TF316814"/>
<dbReference type="Reactome" id="R-MMU-375281">
    <property type="pathway name" value="Hormone ligand-binding receptors"/>
</dbReference>
<dbReference type="Reactome" id="R-MMU-418555">
    <property type="pathway name" value="G alpha (s) signalling events"/>
</dbReference>
<dbReference type="BioGRID-ORCS" id="16867">
    <property type="hits" value="4 hits in 79 CRISPR screens"/>
</dbReference>
<dbReference type="PRO" id="PR:P30730"/>
<dbReference type="Proteomes" id="UP000000589">
    <property type="component" value="Chromosome 17"/>
</dbReference>
<dbReference type="RNAct" id="P30730">
    <property type="molecule type" value="protein"/>
</dbReference>
<dbReference type="Bgee" id="ENSMUSG00000024107">
    <property type="expression patterns" value="Expressed in gonadal ridge and 46 other cell types or tissues"/>
</dbReference>
<dbReference type="ExpressionAtlas" id="P30730">
    <property type="expression patterns" value="baseline and differential"/>
</dbReference>
<dbReference type="GO" id="GO:0034451">
    <property type="term" value="C:centriolar satellite"/>
    <property type="evidence" value="ECO:0007669"/>
    <property type="project" value="Ensembl"/>
</dbReference>
<dbReference type="GO" id="GO:0005886">
    <property type="term" value="C:plasma membrane"/>
    <property type="evidence" value="ECO:0000314"/>
    <property type="project" value="BHF-UCL"/>
</dbReference>
<dbReference type="GO" id="GO:0038106">
    <property type="term" value="F:choriogonadotropin hormone binding"/>
    <property type="evidence" value="ECO:0000314"/>
    <property type="project" value="BHF-UCL"/>
</dbReference>
<dbReference type="GO" id="GO:0035472">
    <property type="term" value="F:choriogonadotropin hormone receptor activity"/>
    <property type="evidence" value="ECO:0000314"/>
    <property type="project" value="BHF-UCL"/>
</dbReference>
<dbReference type="GO" id="GO:0004964">
    <property type="term" value="F:luteinizing hormone receptor activity"/>
    <property type="evidence" value="ECO:0000250"/>
    <property type="project" value="UniProtKB"/>
</dbReference>
<dbReference type="GO" id="GO:0007189">
    <property type="term" value="P:adenylate cyclase-activating G protein-coupled receptor signaling pathway"/>
    <property type="evidence" value="ECO:0000314"/>
    <property type="project" value="BHF-UCL"/>
</dbReference>
<dbReference type="GO" id="GO:0071371">
    <property type="term" value="P:cellular response to gonadotropin stimulus"/>
    <property type="evidence" value="ECO:0000314"/>
    <property type="project" value="BHF-UCL"/>
</dbReference>
<dbReference type="GO" id="GO:0071373">
    <property type="term" value="P:cellular response to luteinizing hormone stimulus"/>
    <property type="evidence" value="ECO:0000250"/>
    <property type="project" value="UniProtKB"/>
</dbReference>
<dbReference type="GO" id="GO:0050890">
    <property type="term" value="P:cognition"/>
    <property type="evidence" value="ECO:0007669"/>
    <property type="project" value="Ensembl"/>
</dbReference>
<dbReference type="GO" id="GO:0046544">
    <property type="term" value="P:development of secondary male sexual characteristics"/>
    <property type="evidence" value="ECO:0000315"/>
    <property type="project" value="MGI"/>
</dbReference>
<dbReference type="GO" id="GO:0008585">
    <property type="term" value="P:female gonad development"/>
    <property type="evidence" value="ECO:0000315"/>
    <property type="project" value="MGI"/>
</dbReference>
<dbReference type="GO" id="GO:0042700">
    <property type="term" value="P:luteinizing hormone signaling pathway"/>
    <property type="evidence" value="ECO:0000250"/>
    <property type="project" value="UniProtKB"/>
</dbReference>
<dbReference type="GO" id="GO:0008584">
    <property type="term" value="P:male gonad development"/>
    <property type="evidence" value="ECO:0000315"/>
    <property type="project" value="MGI"/>
</dbReference>
<dbReference type="GO" id="GO:0001541">
    <property type="term" value="P:ovarian follicle development"/>
    <property type="evidence" value="ECO:0000315"/>
    <property type="project" value="MGI"/>
</dbReference>
<dbReference type="GO" id="GO:0022602">
    <property type="term" value="P:ovulation cycle process"/>
    <property type="evidence" value="ECO:0000315"/>
    <property type="project" value="MGI"/>
</dbReference>
<dbReference type="GO" id="GO:0007200">
    <property type="term" value="P:phospholipase C-activating G protein-coupled receptor signaling pathway"/>
    <property type="evidence" value="ECO:0000314"/>
    <property type="project" value="BHF-UCL"/>
</dbReference>
<dbReference type="GO" id="GO:0032962">
    <property type="term" value="P:positive regulation of inositol trisphosphate biosynthetic process"/>
    <property type="evidence" value="ECO:0000314"/>
    <property type="project" value="BHF-UCL"/>
</dbReference>
<dbReference type="GO" id="GO:0090030">
    <property type="term" value="P:regulation of steroid hormone biosynthetic process"/>
    <property type="evidence" value="ECO:0000315"/>
    <property type="project" value="MGI"/>
</dbReference>
<dbReference type="GO" id="GO:0072520">
    <property type="term" value="P:seminiferous tubule development"/>
    <property type="evidence" value="ECO:0000315"/>
    <property type="project" value="MGI"/>
</dbReference>
<dbReference type="GO" id="GO:0007283">
    <property type="term" value="P:spermatogenesis"/>
    <property type="evidence" value="ECO:0000315"/>
    <property type="project" value="MGI"/>
</dbReference>
<dbReference type="GO" id="GO:0060065">
    <property type="term" value="P:uterus development"/>
    <property type="evidence" value="ECO:0000315"/>
    <property type="project" value="MGI"/>
</dbReference>
<dbReference type="CDD" id="cd15359">
    <property type="entry name" value="7tmA_LHCGR"/>
    <property type="match status" value="1"/>
</dbReference>
<dbReference type="FunFam" id="1.20.1070.10:FF:000019">
    <property type="entry name" value="Lutropin-choriogonadotropic hormone receptor"/>
    <property type="match status" value="1"/>
</dbReference>
<dbReference type="FunFam" id="3.80.10.10:FF:000128">
    <property type="entry name" value="Lutropin-choriogonadotropic hormone receptor"/>
    <property type="match status" value="1"/>
</dbReference>
<dbReference type="Gene3D" id="1.20.1070.10">
    <property type="entry name" value="Rhodopsin 7-helix transmembrane proteins"/>
    <property type="match status" value="1"/>
</dbReference>
<dbReference type="Gene3D" id="3.80.10.10">
    <property type="entry name" value="Ribonuclease Inhibitor"/>
    <property type="match status" value="1"/>
</dbReference>
<dbReference type="InterPro" id="IPR000276">
    <property type="entry name" value="GPCR_Rhodpsn"/>
</dbReference>
<dbReference type="InterPro" id="IPR017452">
    <property type="entry name" value="GPCR_Rhodpsn_7TM"/>
</dbReference>
<dbReference type="InterPro" id="IPR002131">
    <property type="entry name" value="Gphrmn_rcpt_fam"/>
</dbReference>
<dbReference type="InterPro" id="IPR026906">
    <property type="entry name" value="LRR_5"/>
</dbReference>
<dbReference type="InterPro" id="IPR032675">
    <property type="entry name" value="LRR_dom_sf"/>
</dbReference>
<dbReference type="InterPro" id="IPR002273">
    <property type="entry name" value="LSH_rcpt"/>
</dbReference>
<dbReference type="PANTHER" id="PTHR24372">
    <property type="entry name" value="GLYCOPROTEIN HORMONE RECEPTOR"/>
    <property type="match status" value="1"/>
</dbReference>
<dbReference type="PANTHER" id="PTHR24372:SF1">
    <property type="entry name" value="LUTROPIN-CHORIOGONADOTROPIC HORMONE RECEPTOR"/>
    <property type="match status" value="1"/>
</dbReference>
<dbReference type="Pfam" id="PF00001">
    <property type="entry name" value="7tm_1"/>
    <property type="match status" value="1"/>
</dbReference>
<dbReference type="Pfam" id="PF13306">
    <property type="entry name" value="LRR_5"/>
    <property type="match status" value="2"/>
</dbReference>
<dbReference type="PRINTS" id="PR00373">
    <property type="entry name" value="GLYCHORMONER"/>
</dbReference>
<dbReference type="PRINTS" id="PR00237">
    <property type="entry name" value="GPCRRHODOPSN"/>
</dbReference>
<dbReference type="PRINTS" id="PR01144">
    <property type="entry name" value="LSHRECEPTOR"/>
</dbReference>
<dbReference type="SUPFAM" id="SSF81321">
    <property type="entry name" value="Family A G protein-coupled receptor-like"/>
    <property type="match status" value="1"/>
</dbReference>
<dbReference type="SUPFAM" id="SSF52058">
    <property type="entry name" value="L domain-like"/>
    <property type="match status" value="1"/>
</dbReference>
<dbReference type="PROSITE" id="PS00237">
    <property type="entry name" value="G_PROTEIN_RECEP_F1_1"/>
    <property type="match status" value="1"/>
</dbReference>
<dbReference type="PROSITE" id="PS50262">
    <property type="entry name" value="G_PROTEIN_RECEP_F1_2"/>
    <property type="match status" value="1"/>
</dbReference>